<comment type="subcellular location">
    <subcellularLocation>
        <location evidence="3">Secreted</location>
    </subcellularLocation>
</comment>
<comment type="similarity">
    <text evidence="3">Belongs to the cysteine-rich repeat secretory protein family.</text>
</comment>
<comment type="sequence caution" evidence="3">
    <conflict type="erroneous gene model prediction">
        <sequence resource="EMBL-CDS" id="AAF19717"/>
    </conflict>
</comment>
<proteinExistence type="evidence at transcript level"/>
<sequence length="273" mass="30350">MTRIIDVSLFCFFLFSLGAMSQPSQNLTDCNQFPDTYQSNRNTVLSTLRNHSSLGSYYFNATAGLSPNTVYGMFLCIGNISKTSCSNCVHSATLEMDKSCESHDTSFMFSDECMVRYSDNSFFSLVEDSPATFSYSQNDSLSYPQFYNQTLPGKLDELILKAPSSFSSPVPYFVEDKEHVTQVEGSYDLEAMAQCSPDLDPSSCTVCLGLVVEKFSECCSQSRWARIHFPKCLLRYDISALQPNLTSLGVTTKGDDIFGRTFIAIMIGLLMGL</sequence>
<protein>
    <recommendedName>
        <fullName>Probable cysteine-rich repeat secretory protein 6</fullName>
    </recommendedName>
</protein>
<reference key="1">
    <citation type="journal article" date="2000" name="Nature">
        <title>Sequence and analysis of chromosome 1 of the plant Arabidopsis thaliana.</title>
        <authorList>
            <person name="Theologis A."/>
            <person name="Ecker J.R."/>
            <person name="Palm C.J."/>
            <person name="Federspiel N.A."/>
            <person name="Kaul S."/>
            <person name="White O."/>
            <person name="Alonso J."/>
            <person name="Altafi H."/>
            <person name="Araujo R."/>
            <person name="Bowman C.L."/>
            <person name="Brooks S.Y."/>
            <person name="Buehler E."/>
            <person name="Chan A."/>
            <person name="Chao Q."/>
            <person name="Chen H."/>
            <person name="Cheuk R.F."/>
            <person name="Chin C.W."/>
            <person name="Chung M.K."/>
            <person name="Conn L."/>
            <person name="Conway A.B."/>
            <person name="Conway A.R."/>
            <person name="Creasy T.H."/>
            <person name="Dewar K."/>
            <person name="Dunn P."/>
            <person name="Etgu P."/>
            <person name="Feldblyum T.V."/>
            <person name="Feng J.-D."/>
            <person name="Fong B."/>
            <person name="Fujii C.Y."/>
            <person name="Gill J.E."/>
            <person name="Goldsmith A.D."/>
            <person name="Haas B."/>
            <person name="Hansen N.F."/>
            <person name="Hughes B."/>
            <person name="Huizar L."/>
            <person name="Hunter J.L."/>
            <person name="Jenkins J."/>
            <person name="Johnson-Hopson C."/>
            <person name="Khan S."/>
            <person name="Khaykin E."/>
            <person name="Kim C.J."/>
            <person name="Koo H.L."/>
            <person name="Kremenetskaia I."/>
            <person name="Kurtz D.B."/>
            <person name="Kwan A."/>
            <person name="Lam B."/>
            <person name="Langin-Hooper S."/>
            <person name="Lee A."/>
            <person name="Lee J.M."/>
            <person name="Lenz C.A."/>
            <person name="Li J.H."/>
            <person name="Li Y.-P."/>
            <person name="Lin X."/>
            <person name="Liu S.X."/>
            <person name="Liu Z.A."/>
            <person name="Luros J.S."/>
            <person name="Maiti R."/>
            <person name="Marziali A."/>
            <person name="Militscher J."/>
            <person name="Miranda M."/>
            <person name="Nguyen M."/>
            <person name="Nierman W.C."/>
            <person name="Osborne B.I."/>
            <person name="Pai G."/>
            <person name="Peterson J."/>
            <person name="Pham P.K."/>
            <person name="Rizzo M."/>
            <person name="Rooney T."/>
            <person name="Rowley D."/>
            <person name="Sakano H."/>
            <person name="Salzberg S.L."/>
            <person name="Schwartz J.R."/>
            <person name="Shinn P."/>
            <person name="Southwick A.M."/>
            <person name="Sun H."/>
            <person name="Tallon L.J."/>
            <person name="Tambunga G."/>
            <person name="Toriumi M.J."/>
            <person name="Town C.D."/>
            <person name="Utterback T."/>
            <person name="Van Aken S."/>
            <person name="Vaysberg M."/>
            <person name="Vysotskaia V.S."/>
            <person name="Walker M."/>
            <person name="Wu D."/>
            <person name="Yu G."/>
            <person name="Fraser C.M."/>
            <person name="Venter J.C."/>
            <person name="Davis R.W."/>
        </authorList>
    </citation>
    <scope>NUCLEOTIDE SEQUENCE [LARGE SCALE GENOMIC DNA]</scope>
    <source>
        <strain>cv. Columbia</strain>
    </source>
</reference>
<reference key="2">
    <citation type="journal article" date="2017" name="Plant J.">
        <title>Araport11: a complete reannotation of the Arabidopsis thaliana reference genome.</title>
        <authorList>
            <person name="Cheng C.Y."/>
            <person name="Krishnakumar V."/>
            <person name="Chan A.P."/>
            <person name="Thibaud-Nissen F."/>
            <person name="Schobel S."/>
            <person name="Town C.D."/>
        </authorList>
    </citation>
    <scope>GENOME REANNOTATION</scope>
    <source>
        <strain>cv. Columbia</strain>
    </source>
</reference>
<reference key="3">
    <citation type="journal article" date="2001" name="Plant Physiol.">
        <title>A superfamily of proteins with novel cysteine-rich repeats.</title>
        <authorList>
            <person name="Chen Z."/>
        </authorList>
    </citation>
    <scope>GENE FAMILY ORGANIZATION</scope>
    <scope>NOMENCLATURE</scope>
</reference>
<gene>
    <name type="primary">CRRSP6</name>
    <name type="ordered locus">At1g63580</name>
    <name type="ORF">F2K11.6</name>
</gene>
<evidence type="ECO:0000255" key="1"/>
<evidence type="ECO:0000255" key="2">
    <source>
        <dbReference type="PROSITE-ProRule" id="PRU00806"/>
    </source>
</evidence>
<evidence type="ECO:0000305" key="3"/>
<organism>
    <name type="scientific">Arabidopsis thaliana</name>
    <name type="common">Mouse-ear cress</name>
    <dbReference type="NCBI Taxonomy" id="3702"/>
    <lineage>
        <taxon>Eukaryota</taxon>
        <taxon>Viridiplantae</taxon>
        <taxon>Streptophyta</taxon>
        <taxon>Embryophyta</taxon>
        <taxon>Tracheophyta</taxon>
        <taxon>Spermatophyta</taxon>
        <taxon>Magnoliopsida</taxon>
        <taxon>eudicotyledons</taxon>
        <taxon>Gunneridae</taxon>
        <taxon>Pentapetalae</taxon>
        <taxon>rosids</taxon>
        <taxon>malvids</taxon>
        <taxon>Brassicales</taxon>
        <taxon>Brassicaceae</taxon>
        <taxon>Camelineae</taxon>
        <taxon>Arabidopsis</taxon>
    </lineage>
</organism>
<accession>Q9SH42</accession>
<dbReference type="EMBL" id="AC008047">
    <property type="protein sequence ID" value="AAF19717.1"/>
    <property type="status" value="ALT_SEQ"/>
    <property type="molecule type" value="Genomic_DNA"/>
</dbReference>
<dbReference type="EMBL" id="CP002684">
    <property type="protein sequence ID" value="AEE34115.1"/>
    <property type="molecule type" value="Genomic_DNA"/>
</dbReference>
<dbReference type="PIR" id="H96660">
    <property type="entry name" value="H96660"/>
</dbReference>
<dbReference type="RefSeq" id="NP_176546.1">
    <property type="nucleotide sequence ID" value="NM_105036.2"/>
</dbReference>
<dbReference type="SMR" id="Q9SH42"/>
<dbReference type="BioGRID" id="27884">
    <property type="interactions" value="1"/>
</dbReference>
<dbReference type="IntAct" id="Q9SH42">
    <property type="interactions" value="1"/>
</dbReference>
<dbReference type="STRING" id="3702.Q9SH42"/>
<dbReference type="PaxDb" id="3702-AT1G63580.1"/>
<dbReference type="ProteomicsDB" id="224527"/>
<dbReference type="EnsemblPlants" id="AT1G63580.1">
    <property type="protein sequence ID" value="AT1G63580.1"/>
    <property type="gene ID" value="AT1G63580"/>
</dbReference>
<dbReference type="GeneID" id="842663"/>
<dbReference type="Gramene" id="AT1G63580.1">
    <property type="protein sequence ID" value="AT1G63580.1"/>
    <property type="gene ID" value="AT1G63580"/>
</dbReference>
<dbReference type="KEGG" id="ath:AT1G63580"/>
<dbReference type="Araport" id="AT1G63580"/>
<dbReference type="TAIR" id="AT1G63580"/>
<dbReference type="eggNOG" id="ENOG502QWDY">
    <property type="taxonomic scope" value="Eukaryota"/>
</dbReference>
<dbReference type="HOGENOM" id="CLU_000288_35_0_1"/>
<dbReference type="InParanoid" id="Q9SH42"/>
<dbReference type="OMA" id="FLCIGNI"/>
<dbReference type="PhylomeDB" id="Q9SH42"/>
<dbReference type="PRO" id="PR:Q9SH42"/>
<dbReference type="Proteomes" id="UP000006548">
    <property type="component" value="Chromosome 1"/>
</dbReference>
<dbReference type="ExpressionAtlas" id="Q9SH42">
    <property type="expression patterns" value="baseline and differential"/>
</dbReference>
<dbReference type="GO" id="GO:0005576">
    <property type="term" value="C:extracellular region"/>
    <property type="evidence" value="ECO:0007669"/>
    <property type="project" value="UniProtKB-SubCell"/>
</dbReference>
<dbReference type="GO" id="GO:0005886">
    <property type="term" value="C:plasma membrane"/>
    <property type="evidence" value="ECO:0000314"/>
    <property type="project" value="TAIR"/>
</dbReference>
<dbReference type="CDD" id="cd23509">
    <property type="entry name" value="Gnk2-like"/>
    <property type="match status" value="2"/>
</dbReference>
<dbReference type="FunFam" id="3.30.430.20:FF:000030">
    <property type="entry name" value="Cysteine-rich repeat secretory protein 9"/>
    <property type="match status" value="1"/>
</dbReference>
<dbReference type="Gene3D" id="3.30.430.20">
    <property type="entry name" value="Gnk2 domain, C-X8-C-X2-C motif"/>
    <property type="match status" value="2"/>
</dbReference>
<dbReference type="InterPro" id="IPR002902">
    <property type="entry name" value="GNK2"/>
</dbReference>
<dbReference type="InterPro" id="IPR038408">
    <property type="entry name" value="GNK2_sf"/>
</dbReference>
<dbReference type="PANTHER" id="PTHR32099">
    <property type="entry name" value="CYSTEINE-RICH REPEAT SECRETORY PROTEIN"/>
    <property type="match status" value="1"/>
</dbReference>
<dbReference type="PANTHER" id="PTHR32099:SF41">
    <property type="entry name" value="CYSTEINE-RICH REPEAT SECRETORY PROTEIN 4-RELATED"/>
    <property type="match status" value="1"/>
</dbReference>
<dbReference type="Pfam" id="PF01657">
    <property type="entry name" value="Stress-antifung"/>
    <property type="match status" value="2"/>
</dbReference>
<dbReference type="PROSITE" id="PS51473">
    <property type="entry name" value="GNK2"/>
    <property type="match status" value="2"/>
</dbReference>
<keyword id="KW-1185">Reference proteome</keyword>
<keyword id="KW-0677">Repeat</keyword>
<keyword id="KW-0964">Secreted</keyword>
<keyword id="KW-0732">Signal</keyword>
<name>CRRS6_ARATH</name>
<feature type="signal peptide" evidence="1">
    <location>
        <begin position="1"/>
        <end position="21"/>
    </location>
</feature>
<feature type="chain" id="PRO_0000296134" description="Probable cysteine-rich repeat secretory protein 6">
    <location>
        <begin position="22"/>
        <end position="273"/>
    </location>
</feature>
<feature type="domain" description="Gnk2-homologous 1" evidence="2">
    <location>
        <begin position="22"/>
        <end position="122"/>
    </location>
</feature>
<feature type="domain" description="Gnk2-homologous 2" evidence="2">
    <location>
        <begin position="128"/>
        <end position="241"/>
    </location>
</feature>